<protein>
    <recommendedName>
        <fullName evidence="1">Urease accessory protein UreG</fullName>
    </recommendedName>
</protein>
<reference key="1">
    <citation type="journal article" date="2007" name="Genome Res.">
        <title>Reductive evolution and niche adaptation inferred from the genome of Mycobacterium ulcerans, the causative agent of Buruli ulcer.</title>
        <authorList>
            <person name="Stinear T.P."/>
            <person name="Seemann T."/>
            <person name="Pidot S."/>
            <person name="Frigui W."/>
            <person name="Reysset G."/>
            <person name="Garnier T."/>
            <person name="Meurice G."/>
            <person name="Simon D."/>
            <person name="Bouchier C."/>
            <person name="Ma L."/>
            <person name="Tichit M."/>
            <person name="Porter J.L."/>
            <person name="Ryan J."/>
            <person name="Johnson P.D.R."/>
            <person name="Davies J.K."/>
            <person name="Jenkin G.A."/>
            <person name="Small P.L.C."/>
            <person name="Jones L.M."/>
            <person name="Tekaia F."/>
            <person name="Laval F."/>
            <person name="Daffe M."/>
            <person name="Parkhill J."/>
            <person name="Cole S.T."/>
        </authorList>
    </citation>
    <scope>NUCLEOTIDE SEQUENCE [LARGE SCALE GENOMIC DNA]</scope>
    <source>
        <strain>Agy99</strain>
    </source>
</reference>
<proteinExistence type="inferred from homology"/>
<dbReference type="EMBL" id="CP000325">
    <property type="protein sequence ID" value="ABL05279.1"/>
    <property type="molecule type" value="Genomic_DNA"/>
</dbReference>
<dbReference type="RefSeq" id="WP_011740891.1">
    <property type="nucleotide sequence ID" value="NC_008611.1"/>
</dbReference>
<dbReference type="SMR" id="A0PSG0"/>
<dbReference type="KEGG" id="mul:MUL_3027"/>
<dbReference type="eggNOG" id="COG0378">
    <property type="taxonomic scope" value="Bacteria"/>
</dbReference>
<dbReference type="HOGENOM" id="CLU_072144_1_0_11"/>
<dbReference type="Proteomes" id="UP000000765">
    <property type="component" value="Chromosome"/>
</dbReference>
<dbReference type="GO" id="GO:0005737">
    <property type="term" value="C:cytoplasm"/>
    <property type="evidence" value="ECO:0007669"/>
    <property type="project" value="UniProtKB-SubCell"/>
</dbReference>
<dbReference type="GO" id="GO:0005525">
    <property type="term" value="F:GTP binding"/>
    <property type="evidence" value="ECO:0007669"/>
    <property type="project" value="UniProtKB-KW"/>
</dbReference>
<dbReference type="GO" id="GO:0003924">
    <property type="term" value="F:GTPase activity"/>
    <property type="evidence" value="ECO:0007669"/>
    <property type="project" value="InterPro"/>
</dbReference>
<dbReference type="GO" id="GO:0016151">
    <property type="term" value="F:nickel cation binding"/>
    <property type="evidence" value="ECO:0007669"/>
    <property type="project" value="UniProtKB-UniRule"/>
</dbReference>
<dbReference type="GO" id="GO:0043419">
    <property type="term" value="P:urea catabolic process"/>
    <property type="evidence" value="ECO:0007669"/>
    <property type="project" value="InterPro"/>
</dbReference>
<dbReference type="CDD" id="cd05540">
    <property type="entry name" value="UreG"/>
    <property type="match status" value="1"/>
</dbReference>
<dbReference type="FunFam" id="3.40.50.300:FF:000208">
    <property type="entry name" value="Urease accessory protein UreG"/>
    <property type="match status" value="1"/>
</dbReference>
<dbReference type="Gene3D" id="3.40.50.300">
    <property type="entry name" value="P-loop containing nucleotide triphosphate hydrolases"/>
    <property type="match status" value="1"/>
</dbReference>
<dbReference type="HAMAP" id="MF_01389">
    <property type="entry name" value="UreG"/>
    <property type="match status" value="1"/>
</dbReference>
<dbReference type="InterPro" id="IPR003495">
    <property type="entry name" value="CobW/HypB/UreG_nucleotide-bd"/>
</dbReference>
<dbReference type="InterPro" id="IPR027417">
    <property type="entry name" value="P-loop_NTPase"/>
</dbReference>
<dbReference type="InterPro" id="IPR004400">
    <property type="entry name" value="UreG"/>
</dbReference>
<dbReference type="NCBIfam" id="TIGR00101">
    <property type="entry name" value="ureG"/>
    <property type="match status" value="1"/>
</dbReference>
<dbReference type="PANTHER" id="PTHR31715">
    <property type="entry name" value="UREASE ACCESSORY PROTEIN G"/>
    <property type="match status" value="1"/>
</dbReference>
<dbReference type="PANTHER" id="PTHR31715:SF0">
    <property type="entry name" value="UREASE ACCESSORY PROTEIN G"/>
    <property type="match status" value="1"/>
</dbReference>
<dbReference type="Pfam" id="PF02492">
    <property type="entry name" value="cobW"/>
    <property type="match status" value="1"/>
</dbReference>
<dbReference type="PIRSF" id="PIRSF005624">
    <property type="entry name" value="Ni-bind_GTPase"/>
    <property type="match status" value="1"/>
</dbReference>
<dbReference type="SUPFAM" id="SSF52540">
    <property type="entry name" value="P-loop containing nucleoside triphosphate hydrolases"/>
    <property type="match status" value="1"/>
</dbReference>
<gene>
    <name evidence="1" type="primary">ureG</name>
    <name type="ordered locus">MUL_3027</name>
</gene>
<accession>A0PSG0</accession>
<name>UREG_MYCUA</name>
<sequence length="223" mass="23662">MAKHSHDHTHDHHDRPRRVRKPGEPLRIGVGGPVGSGKTALVAAICRQLRDELSLAVLTNDIYTTEDADFLRKHAVLPDSRIIAVQTGGCPHTAIRDDITANLDAIDDLIAAHDALDLILVESGGDNLTATFSSGLVDVQIFVIDVAGGDKVPRKGGPGVTFSDLLVVNKTDLAPLVGADLKVMARDAEAVRDGRPTVLQSLTEDPAATKVLDWVRSQLAAAG</sequence>
<feature type="chain" id="PRO_1000145194" description="Urease accessory protein UreG">
    <location>
        <begin position="1"/>
        <end position="223"/>
    </location>
</feature>
<feature type="region of interest" description="Disordered" evidence="2">
    <location>
        <begin position="1"/>
        <end position="30"/>
    </location>
</feature>
<feature type="binding site" evidence="1">
    <location>
        <begin position="32"/>
        <end position="39"/>
    </location>
    <ligand>
        <name>GTP</name>
        <dbReference type="ChEBI" id="CHEBI:37565"/>
    </ligand>
</feature>
<evidence type="ECO:0000255" key="1">
    <source>
        <dbReference type="HAMAP-Rule" id="MF_01389"/>
    </source>
</evidence>
<evidence type="ECO:0000256" key="2">
    <source>
        <dbReference type="SAM" id="MobiDB-lite"/>
    </source>
</evidence>
<organism>
    <name type="scientific">Mycobacterium ulcerans (strain Agy99)</name>
    <dbReference type="NCBI Taxonomy" id="362242"/>
    <lineage>
        <taxon>Bacteria</taxon>
        <taxon>Bacillati</taxon>
        <taxon>Actinomycetota</taxon>
        <taxon>Actinomycetes</taxon>
        <taxon>Mycobacteriales</taxon>
        <taxon>Mycobacteriaceae</taxon>
        <taxon>Mycobacterium</taxon>
        <taxon>Mycobacterium ulcerans group</taxon>
    </lineage>
</organism>
<comment type="function">
    <text evidence="1">Facilitates the functional incorporation of the urease nickel metallocenter. This process requires GTP hydrolysis, probably effectuated by UreG.</text>
</comment>
<comment type="subunit">
    <text evidence="1">Homodimer. UreD, UreF and UreG form a complex that acts as a GTP-hydrolysis-dependent molecular chaperone, activating the urease apoprotein by helping to assemble the nickel containing metallocenter of UreC. The UreE protein probably delivers the nickel.</text>
</comment>
<comment type="subcellular location">
    <subcellularLocation>
        <location evidence="1">Cytoplasm</location>
    </subcellularLocation>
</comment>
<comment type="similarity">
    <text evidence="1">Belongs to the SIMIBI class G3E GTPase family. UreG subfamily.</text>
</comment>
<keyword id="KW-0143">Chaperone</keyword>
<keyword id="KW-0963">Cytoplasm</keyword>
<keyword id="KW-0342">GTP-binding</keyword>
<keyword id="KW-0996">Nickel insertion</keyword>
<keyword id="KW-0547">Nucleotide-binding</keyword>